<accession>A6W7N6</accession>
<feature type="chain" id="PRO_1000080632" description="Ketol-acid reductoisomerase (NADP(+))">
    <location>
        <begin position="1"/>
        <end position="342"/>
    </location>
</feature>
<feature type="domain" description="KARI N-terminal Rossmann" evidence="2">
    <location>
        <begin position="2"/>
        <end position="182"/>
    </location>
</feature>
<feature type="domain" description="KARI C-terminal knotted" evidence="3">
    <location>
        <begin position="183"/>
        <end position="328"/>
    </location>
</feature>
<feature type="active site" evidence="1">
    <location>
        <position position="108"/>
    </location>
</feature>
<feature type="binding site" evidence="1">
    <location>
        <begin position="25"/>
        <end position="28"/>
    </location>
    <ligand>
        <name>NADP(+)</name>
        <dbReference type="ChEBI" id="CHEBI:58349"/>
    </ligand>
</feature>
<feature type="binding site" evidence="1">
    <location>
        <position position="48"/>
    </location>
    <ligand>
        <name>NADP(+)</name>
        <dbReference type="ChEBI" id="CHEBI:58349"/>
    </ligand>
</feature>
<feature type="binding site" evidence="1">
    <location>
        <position position="51"/>
    </location>
    <ligand>
        <name>NADP(+)</name>
        <dbReference type="ChEBI" id="CHEBI:58349"/>
    </ligand>
</feature>
<feature type="binding site" evidence="1">
    <location>
        <position position="53"/>
    </location>
    <ligand>
        <name>NADP(+)</name>
        <dbReference type="ChEBI" id="CHEBI:58349"/>
    </ligand>
</feature>
<feature type="binding site" evidence="1">
    <location>
        <begin position="83"/>
        <end position="86"/>
    </location>
    <ligand>
        <name>NADP(+)</name>
        <dbReference type="ChEBI" id="CHEBI:58349"/>
    </ligand>
</feature>
<feature type="binding site" evidence="1">
    <location>
        <position position="134"/>
    </location>
    <ligand>
        <name>NADP(+)</name>
        <dbReference type="ChEBI" id="CHEBI:58349"/>
    </ligand>
</feature>
<feature type="binding site" evidence="1">
    <location>
        <position position="191"/>
    </location>
    <ligand>
        <name>Mg(2+)</name>
        <dbReference type="ChEBI" id="CHEBI:18420"/>
        <label>1</label>
    </ligand>
</feature>
<feature type="binding site" evidence="1">
    <location>
        <position position="191"/>
    </location>
    <ligand>
        <name>Mg(2+)</name>
        <dbReference type="ChEBI" id="CHEBI:18420"/>
        <label>2</label>
    </ligand>
</feature>
<feature type="binding site" evidence="1">
    <location>
        <position position="195"/>
    </location>
    <ligand>
        <name>Mg(2+)</name>
        <dbReference type="ChEBI" id="CHEBI:18420"/>
        <label>1</label>
    </ligand>
</feature>
<feature type="binding site" evidence="1">
    <location>
        <position position="227"/>
    </location>
    <ligand>
        <name>Mg(2+)</name>
        <dbReference type="ChEBI" id="CHEBI:18420"/>
        <label>2</label>
    </ligand>
</feature>
<feature type="binding site" evidence="1">
    <location>
        <position position="231"/>
    </location>
    <ligand>
        <name>Mg(2+)</name>
        <dbReference type="ChEBI" id="CHEBI:18420"/>
        <label>2</label>
    </ligand>
</feature>
<feature type="binding site" evidence="1">
    <location>
        <position position="252"/>
    </location>
    <ligand>
        <name>substrate</name>
    </ligand>
</feature>
<comment type="function">
    <text evidence="1">Involved in the biosynthesis of branched-chain amino acids (BCAA). Catalyzes an alkyl-migration followed by a ketol-acid reduction of (S)-2-acetolactate (S2AL) to yield (R)-2,3-dihydroxy-isovalerate. In the isomerase reaction, S2AL is rearranged via a Mg-dependent methyl migration to produce 3-hydroxy-3-methyl-2-ketobutyrate (HMKB). In the reductase reaction, this 2-ketoacid undergoes a metal-dependent reduction by NADPH to yield (R)-2,3-dihydroxy-isovalerate.</text>
</comment>
<comment type="catalytic activity">
    <reaction evidence="1">
        <text>(2R)-2,3-dihydroxy-3-methylbutanoate + NADP(+) = (2S)-2-acetolactate + NADPH + H(+)</text>
        <dbReference type="Rhea" id="RHEA:22068"/>
        <dbReference type="ChEBI" id="CHEBI:15378"/>
        <dbReference type="ChEBI" id="CHEBI:49072"/>
        <dbReference type="ChEBI" id="CHEBI:57783"/>
        <dbReference type="ChEBI" id="CHEBI:58349"/>
        <dbReference type="ChEBI" id="CHEBI:58476"/>
        <dbReference type="EC" id="1.1.1.86"/>
    </reaction>
</comment>
<comment type="catalytic activity">
    <reaction evidence="1">
        <text>(2R,3R)-2,3-dihydroxy-3-methylpentanoate + NADP(+) = (S)-2-ethyl-2-hydroxy-3-oxobutanoate + NADPH + H(+)</text>
        <dbReference type="Rhea" id="RHEA:13493"/>
        <dbReference type="ChEBI" id="CHEBI:15378"/>
        <dbReference type="ChEBI" id="CHEBI:49256"/>
        <dbReference type="ChEBI" id="CHEBI:49258"/>
        <dbReference type="ChEBI" id="CHEBI:57783"/>
        <dbReference type="ChEBI" id="CHEBI:58349"/>
        <dbReference type="EC" id="1.1.1.86"/>
    </reaction>
</comment>
<comment type="cofactor">
    <cofactor evidence="1">
        <name>Mg(2+)</name>
        <dbReference type="ChEBI" id="CHEBI:18420"/>
    </cofactor>
    <text evidence="1">Binds 2 magnesium ions per subunit.</text>
</comment>
<comment type="pathway">
    <text evidence="1">Amino-acid biosynthesis; L-isoleucine biosynthesis; L-isoleucine from 2-oxobutanoate: step 2/4.</text>
</comment>
<comment type="pathway">
    <text evidence="1">Amino-acid biosynthesis; L-valine biosynthesis; L-valine from pyruvate: step 2/4.</text>
</comment>
<comment type="similarity">
    <text evidence="1">Belongs to the ketol-acid reductoisomerase family.</text>
</comment>
<protein>
    <recommendedName>
        <fullName evidence="1">Ketol-acid reductoisomerase (NADP(+))</fullName>
        <shortName evidence="1">KARI</shortName>
        <ecNumber evidence="1">1.1.1.86</ecNumber>
    </recommendedName>
    <alternativeName>
        <fullName evidence="1">Acetohydroxy-acid isomeroreductase</fullName>
        <shortName evidence="1">AHIR</shortName>
    </alternativeName>
    <alternativeName>
        <fullName evidence="1">Alpha-keto-beta-hydroxylacyl reductoisomerase</fullName>
    </alternativeName>
    <alternativeName>
        <fullName evidence="1">Ketol-acid reductoisomerase type 1</fullName>
    </alternativeName>
    <alternativeName>
        <fullName evidence="1">Ketol-acid reductoisomerase type I</fullName>
    </alternativeName>
</protein>
<gene>
    <name evidence="1" type="primary">ilvC</name>
    <name type="ordered locus">Krad_1337</name>
</gene>
<evidence type="ECO:0000255" key="1">
    <source>
        <dbReference type="HAMAP-Rule" id="MF_00435"/>
    </source>
</evidence>
<evidence type="ECO:0000255" key="2">
    <source>
        <dbReference type="PROSITE-ProRule" id="PRU01197"/>
    </source>
</evidence>
<evidence type="ECO:0000255" key="3">
    <source>
        <dbReference type="PROSITE-ProRule" id="PRU01198"/>
    </source>
</evidence>
<name>ILVC_KINRD</name>
<sequence length="342" mass="37000">MAEMFYDDDADLSTITGKKVAVLGFGSQGHAHALSLRDSGVDVVVGLKEGSKSRAKAEEQGLTVLTPFEASKAADVIMVLVPDHLQRGLYAEAIEPNLTAGKALFFSHGFNIRFGYIKPPADVDVVMVAPKGPGHLVRREYVDGRGVPVIVAVEQDATGQAWALALAYAKAIGGLRAGGIKTTFTEETETDLFGEQAVLCGGASALVQTGFEVLTEAGYQPEVAYFECLHELKLIVDLMYEGGIAKQRWSVSDTAEWGDYVSGPRVIDASVKERMKDVLKDIQDGTFARNFIEDQDAGAPKFKELRAKAEQHPIEATGRELRKLMAWVKSDDSDYVEGSAAR</sequence>
<reference key="1">
    <citation type="journal article" date="2008" name="PLoS ONE">
        <title>Survival in nuclear waste, extreme resistance, and potential applications gleaned from the genome sequence of Kineococcus radiotolerans SRS30216.</title>
        <authorList>
            <person name="Bagwell C.E."/>
            <person name="Bhat S."/>
            <person name="Hawkins G.M."/>
            <person name="Smith B.W."/>
            <person name="Biswas T."/>
            <person name="Hoover T.R."/>
            <person name="Saunders E."/>
            <person name="Han C.S."/>
            <person name="Tsodikov O.V."/>
            <person name="Shimkets L.J."/>
        </authorList>
    </citation>
    <scope>NUCLEOTIDE SEQUENCE [LARGE SCALE GENOMIC DNA]</scope>
    <source>
        <strain>ATCC BAA-149 / DSM 14245 / SRS30216</strain>
    </source>
</reference>
<organism>
    <name type="scientific">Kineococcus radiotolerans (strain ATCC BAA-149 / DSM 14245 / SRS30216)</name>
    <dbReference type="NCBI Taxonomy" id="266940"/>
    <lineage>
        <taxon>Bacteria</taxon>
        <taxon>Bacillati</taxon>
        <taxon>Actinomycetota</taxon>
        <taxon>Actinomycetes</taxon>
        <taxon>Kineosporiales</taxon>
        <taxon>Kineosporiaceae</taxon>
        <taxon>Kineococcus</taxon>
    </lineage>
</organism>
<keyword id="KW-0028">Amino-acid biosynthesis</keyword>
<keyword id="KW-0100">Branched-chain amino acid biosynthesis</keyword>
<keyword id="KW-0460">Magnesium</keyword>
<keyword id="KW-0479">Metal-binding</keyword>
<keyword id="KW-0521">NADP</keyword>
<keyword id="KW-0560">Oxidoreductase</keyword>
<keyword id="KW-1185">Reference proteome</keyword>
<dbReference type="EC" id="1.1.1.86" evidence="1"/>
<dbReference type="EMBL" id="CP000750">
    <property type="protein sequence ID" value="ABS02825.1"/>
    <property type="molecule type" value="Genomic_DNA"/>
</dbReference>
<dbReference type="SMR" id="A6W7N6"/>
<dbReference type="STRING" id="266940.Krad_1337"/>
<dbReference type="KEGG" id="kra:Krad_1337"/>
<dbReference type="eggNOG" id="COG0059">
    <property type="taxonomic scope" value="Bacteria"/>
</dbReference>
<dbReference type="HOGENOM" id="CLU_033821_0_1_11"/>
<dbReference type="OrthoDB" id="9804088at2"/>
<dbReference type="UniPathway" id="UPA00047">
    <property type="reaction ID" value="UER00056"/>
</dbReference>
<dbReference type="UniPathway" id="UPA00049">
    <property type="reaction ID" value="UER00060"/>
</dbReference>
<dbReference type="Proteomes" id="UP000001116">
    <property type="component" value="Chromosome"/>
</dbReference>
<dbReference type="GO" id="GO:0005829">
    <property type="term" value="C:cytosol"/>
    <property type="evidence" value="ECO:0007669"/>
    <property type="project" value="TreeGrafter"/>
</dbReference>
<dbReference type="GO" id="GO:0004455">
    <property type="term" value="F:ketol-acid reductoisomerase activity"/>
    <property type="evidence" value="ECO:0007669"/>
    <property type="project" value="UniProtKB-UniRule"/>
</dbReference>
<dbReference type="GO" id="GO:0000287">
    <property type="term" value="F:magnesium ion binding"/>
    <property type="evidence" value="ECO:0007669"/>
    <property type="project" value="UniProtKB-UniRule"/>
</dbReference>
<dbReference type="GO" id="GO:0050661">
    <property type="term" value="F:NADP binding"/>
    <property type="evidence" value="ECO:0007669"/>
    <property type="project" value="InterPro"/>
</dbReference>
<dbReference type="GO" id="GO:0009097">
    <property type="term" value="P:isoleucine biosynthetic process"/>
    <property type="evidence" value="ECO:0007669"/>
    <property type="project" value="UniProtKB-UniRule"/>
</dbReference>
<dbReference type="GO" id="GO:0009099">
    <property type="term" value="P:L-valine biosynthetic process"/>
    <property type="evidence" value="ECO:0007669"/>
    <property type="project" value="UniProtKB-UniRule"/>
</dbReference>
<dbReference type="FunFam" id="3.40.50.720:FF:000023">
    <property type="entry name" value="Ketol-acid reductoisomerase (NADP(+))"/>
    <property type="match status" value="1"/>
</dbReference>
<dbReference type="Gene3D" id="6.10.240.10">
    <property type="match status" value="1"/>
</dbReference>
<dbReference type="Gene3D" id="3.40.50.720">
    <property type="entry name" value="NAD(P)-binding Rossmann-like Domain"/>
    <property type="match status" value="1"/>
</dbReference>
<dbReference type="HAMAP" id="MF_00435">
    <property type="entry name" value="IlvC"/>
    <property type="match status" value="1"/>
</dbReference>
<dbReference type="InterPro" id="IPR008927">
    <property type="entry name" value="6-PGluconate_DH-like_C_sf"/>
</dbReference>
<dbReference type="InterPro" id="IPR013023">
    <property type="entry name" value="KARI"/>
</dbReference>
<dbReference type="InterPro" id="IPR000506">
    <property type="entry name" value="KARI_C"/>
</dbReference>
<dbReference type="InterPro" id="IPR013116">
    <property type="entry name" value="KARI_N"/>
</dbReference>
<dbReference type="InterPro" id="IPR014359">
    <property type="entry name" value="KARI_prok"/>
</dbReference>
<dbReference type="InterPro" id="IPR036291">
    <property type="entry name" value="NAD(P)-bd_dom_sf"/>
</dbReference>
<dbReference type="NCBIfam" id="TIGR00465">
    <property type="entry name" value="ilvC"/>
    <property type="match status" value="1"/>
</dbReference>
<dbReference type="NCBIfam" id="NF004017">
    <property type="entry name" value="PRK05479.1"/>
    <property type="match status" value="1"/>
</dbReference>
<dbReference type="NCBIfam" id="NF009940">
    <property type="entry name" value="PRK13403.1"/>
    <property type="match status" value="1"/>
</dbReference>
<dbReference type="PANTHER" id="PTHR21371">
    <property type="entry name" value="KETOL-ACID REDUCTOISOMERASE, MITOCHONDRIAL"/>
    <property type="match status" value="1"/>
</dbReference>
<dbReference type="PANTHER" id="PTHR21371:SF1">
    <property type="entry name" value="KETOL-ACID REDUCTOISOMERASE, MITOCHONDRIAL"/>
    <property type="match status" value="1"/>
</dbReference>
<dbReference type="Pfam" id="PF01450">
    <property type="entry name" value="KARI_C"/>
    <property type="match status" value="1"/>
</dbReference>
<dbReference type="Pfam" id="PF07991">
    <property type="entry name" value="KARI_N"/>
    <property type="match status" value="1"/>
</dbReference>
<dbReference type="PIRSF" id="PIRSF000116">
    <property type="entry name" value="IlvC_gammaproteo"/>
    <property type="match status" value="1"/>
</dbReference>
<dbReference type="SUPFAM" id="SSF48179">
    <property type="entry name" value="6-phosphogluconate dehydrogenase C-terminal domain-like"/>
    <property type="match status" value="1"/>
</dbReference>
<dbReference type="SUPFAM" id="SSF51735">
    <property type="entry name" value="NAD(P)-binding Rossmann-fold domains"/>
    <property type="match status" value="1"/>
</dbReference>
<dbReference type="PROSITE" id="PS51851">
    <property type="entry name" value="KARI_C"/>
    <property type="match status" value="1"/>
</dbReference>
<dbReference type="PROSITE" id="PS51850">
    <property type="entry name" value="KARI_N"/>
    <property type="match status" value="1"/>
</dbReference>
<proteinExistence type="inferred from homology"/>